<gene>
    <name evidence="1" type="primary">psbL</name>
</gene>
<protein>
    <recommendedName>
        <fullName evidence="1">Photosystem II reaction center protein L</fullName>
        <shortName evidence="1">PSII-L</shortName>
    </recommendedName>
</protein>
<comment type="function">
    <text evidence="1">One of the components of the core complex of photosystem II (PSII). PSII is a light-driven water:plastoquinone oxidoreductase that uses light energy to abstract electrons from H(2)O, generating O(2) and a proton gradient subsequently used for ATP formation. It consists of a core antenna complex that captures photons, and an electron transfer chain that converts photonic excitation into a charge separation. This subunit is found at the monomer-monomer interface and is required for correct PSII assembly and/or dimerization.</text>
</comment>
<comment type="subunit">
    <text evidence="1">PSII is composed of 1 copy each of membrane proteins PsbA, PsbB, PsbC, PsbD, PsbE, PsbF, PsbH, PsbI, PsbJ, PsbK, PsbL, PsbM, PsbT, PsbX, PsbY, PsbZ, Psb30/Ycf12, at least 3 peripheral proteins of the oxygen-evolving complex and a large number of cofactors. It forms dimeric complexes.</text>
</comment>
<comment type="subcellular location">
    <subcellularLocation>
        <location evidence="1">Plastid</location>
        <location evidence="1">Chloroplast thylakoid membrane</location>
        <topology evidence="1">Single-pass membrane protein</topology>
    </subcellularLocation>
</comment>
<comment type="similarity">
    <text evidence="1">Belongs to the PsbL family.</text>
</comment>
<evidence type="ECO:0000255" key="1">
    <source>
        <dbReference type="HAMAP-Rule" id="MF_01317"/>
    </source>
</evidence>
<proteinExistence type="inferred from homology"/>
<feature type="chain" id="PRO_0000219761" description="Photosystem II reaction center protein L">
    <location>
        <begin position="1"/>
        <end position="38"/>
    </location>
</feature>
<feature type="transmembrane region" description="Helical" evidence="1">
    <location>
        <begin position="17"/>
        <end position="37"/>
    </location>
</feature>
<reference key="1">
    <citation type="submission" date="1997-02" db="EMBL/GenBank/DDBJ databases">
        <authorList>
            <person name="Naithani S."/>
        </authorList>
    </citation>
    <scope>NUCLEOTIDE SEQUENCE [GENOMIC DNA]</scope>
    <source>
        <strain>cv. Stoneville D121</strain>
        <tissue>Leaf</tissue>
    </source>
</reference>
<dbReference type="EMBL" id="X89651">
    <property type="protein sequence ID" value="CAA61800.1"/>
    <property type="molecule type" value="Genomic_DNA"/>
</dbReference>
<dbReference type="RefSeq" id="YP_009555912.1">
    <property type="nucleotide sequence ID" value="NC_040929.1"/>
</dbReference>
<dbReference type="SMR" id="P60148"/>
<dbReference type="GeneID" id="39110643"/>
<dbReference type="GO" id="GO:0009535">
    <property type="term" value="C:chloroplast thylakoid membrane"/>
    <property type="evidence" value="ECO:0007669"/>
    <property type="project" value="UniProtKB-SubCell"/>
</dbReference>
<dbReference type="GO" id="GO:0009539">
    <property type="term" value="C:photosystem II reaction center"/>
    <property type="evidence" value="ECO:0007669"/>
    <property type="project" value="InterPro"/>
</dbReference>
<dbReference type="GO" id="GO:0015979">
    <property type="term" value="P:photosynthesis"/>
    <property type="evidence" value="ECO:0007669"/>
    <property type="project" value="UniProtKB-UniRule"/>
</dbReference>
<dbReference type="HAMAP" id="MF_01317">
    <property type="entry name" value="PSII_PsbL"/>
    <property type="match status" value="1"/>
</dbReference>
<dbReference type="InterPro" id="IPR003372">
    <property type="entry name" value="PSII_PsbL"/>
</dbReference>
<dbReference type="InterPro" id="IPR037266">
    <property type="entry name" value="PSII_PsbL_sf"/>
</dbReference>
<dbReference type="NCBIfam" id="NF001972">
    <property type="entry name" value="PRK00753.1"/>
    <property type="match status" value="1"/>
</dbReference>
<dbReference type="Pfam" id="PF02419">
    <property type="entry name" value="PsbL"/>
    <property type="match status" value="1"/>
</dbReference>
<dbReference type="SUPFAM" id="SSF161017">
    <property type="entry name" value="Photosystem II reaction center protein L, PsbL"/>
    <property type="match status" value="1"/>
</dbReference>
<keyword id="KW-0150">Chloroplast</keyword>
<keyword id="KW-0472">Membrane</keyword>
<keyword id="KW-0602">Photosynthesis</keyword>
<keyword id="KW-0604">Photosystem II</keyword>
<keyword id="KW-0934">Plastid</keyword>
<keyword id="KW-0674">Reaction center</keyword>
<keyword id="KW-0793">Thylakoid</keyword>
<keyword id="KW-0812">Transmembrane</keyword>
<keyword id="KW-1133">Transmembrane helix</keyword>
<geneLocation type="chloroplast"/>
<name>PSBL_POPDE</name>
<organism>
    <name type="scientific">Populus deltoides</name>
    <name type="common">Eastern poplar</name>
    <name type="synonym">Eastern cottonwood</name>
    <dbReference type="NCBI Taxonomy" id="3696"/>
    <lineage>
        <taxon>Eukaryota</taxon>
        <taxon>Viridiplantae</taxon>
        <taxon>Streptophyta</taxon>
        <taxon>Embryophyta</taxon>
        <taxon>Tracheophyta</taxon>
        <taxon>Spermatophyta</taxon>
        <taxon>Magnoliopsida</taxon>
        <taxon>eudicotyledons</taxon>
        <taxon>Gunneridae</taxon>
        <taxon>Pentapetalae</taxon>
        <taxon>rosids</taxon>
        <taxon>fabids</taxon>
        <taxon>Malpighiales</taxon>
        <taxon>Salicaceae</taxon>
        <taxon>Saliceae</taxon>
        <taxon>Populus</taxon>
    </lineage>
</organism>
<accession>P60148</accession>
<accession>O47030</accession>
<accession>P12166</accession>
<accession>P12167</accession>
<accession>Q34007</accession>
<sequence>MTQSNPNEQNVELNRTSLYWGLLLIFVLAVLFSNYFFN</sequence>